<reference key="1">
    <citation type="journal article" date="2001" name="Science">
        <title>The genome of the natural genetic engineer Agrobacterium tumefaciens C58.</title>
        <authorList>
            <person name="Wood D.W."/>
            <person name="Setubal J.C."/>
            <person name="Kaul R."/>
            <person name="Monks D.E."/>
            <person name="Kitajima J.P."/>
            <person name="Okura V.K."/>
            <person name="Zhou Y."/>
            <person name="Chen L."/>
            <person name="Wood G.E."/>
            <person name="Almeida N.F. Jr."/>
            <person name="Woo L."/>
            <person name="Chen Y."/>
            <person name="Paulsen I.T."/>
            <person name="Eisen J.A."/>
            <person name="Karp P.D."/>
            <person name="Bovee D. Sr."/>
            <person name="Chapman P."/>
            <person name="Clendenning J."/>
            <person name="Deatherage G."/>
            <person name="Gillet W."/>
            <person name="Grant C."/>
            <person name="Kutyavin T."/>
            <person name="Levy R."/>
            <person name="Li M.-J."/>
            <person name="McClelland E."/>
            <person name="Palmieri A."/>
            <person name="Raymond C."/>
            <person name="Rouse G."/>
            <person name="Saenphimmachak C."/>
            <person name="Wu Z."/>
            <person name="Romero P."/>
            <person name="Gordon D."/>
            <person name="Zhang S."/>
            <person name="Yoo H."/>
            <person name="Tao Y."/>
            <person name="Biddle P."/>
            <person name="Jung M."/>
            <person name="Krespan W."/>
            <person name="Perry M."/>
            <person name="Gordon-Kamm B."/>
            <person name="Liao L."/>
            <person name="Kim S."/>
            <person name="Hendrick C."/>
            <person name="Zhao Z.-Y."/>
            <person name="Dolan M."/>
            <person name="Chumley F."/>
            <person name="Tingey S.V."/>
            <person name="Tomb J.-F."/>
            <person name="Gordon M.P."/>
            <person name="Olson M.V."/>
            <person name="Nester E.W."/>
        </authorList>
    </citation>
    <scope>NUCLEOTIDE SEQUENCE [LARGE SCALE GENOMIC DNA]</scope>
    <source>
        <strain>C58 / ATCC 33970</strain>
    </source>
</reference>
<reference key="2">
    <citation type="journal article" date="2001" name="Science">
        <title>Genome sequence of the plant pathogen and biotechnology agent Agrobacterium tumefaciens C58.</title>
        <authorList>
            <person name="Goodner B."/>
            <person name="Hinkle G."/>
            <person name="Gattung S."/>
            <person name="Miller N."/>
            <person name="Blanchard M."/>
            <person name="Qurollo B."/>
            <person name="Goldman B.S."/>
            <person name="Cao Y."/>
            <person name="Askenazi M."/>
            <person name="Halling C."/>
            <person name="Mullin L."/>
            <person name="Houmiel K."/>
            <person name="Gordon J."/>
            <person name="Vaudin M."/>
            <person name="Iartchouk O."/>
            <person name="Epp A."/>
            <person name="Liu F."/>
            <person name="Wollam C."/>
            <person name="Allinger M."/>
            <person name="Doughty D."/>
            <person name="Scott C."/>
            <person name="Lappas C."/>
            <person name="Markelz B."/>
            <person name="Flanagan C."/>
            <person name="Crowell C."/>
            <person name="Gurson J."/>
            <person name="Lomo C."/>
            <person name="Sear C."/>
            <person name="Strub G."/>
            <person name="Cielo C."/>
            <person name="Slater S."/>
        </authorList>
    </citation>
    <scope>NUCLEOTIDE SEQUENCE [LARGE SCALE GENOMIC DNA]</scope>
    <source>
        <strain>C58 / ATCC 33970</strain>
    </source>
</reference>
<reference key="3">
    <citation type="submission" date="2009-02" db="PDB data bank">
        <title>Crystal structure of Putative hydro-lyase Atu3911 from Agrobacterium tumefaciens. Northeast structural genomics target atr186 (casp target).</title>
        <authorList>
            <consortium name="Northeast structural genomics consortium (NESG)"/>
        </authorList>
    </citation>
    <scope>X-RAY CRYSTALLOGRAPHY (2.8 ANGSTROMS)</scope>
</reference>
<feature type="chain" id="PRO_0000217159" description="Putative hydro-lyase Atu3911">
    <location>
        <begin position="1"/>
        <end position="269"/>
    </location>
</feature>
<feature type="helix" evidence="2">
    <location>
        <begin position="19"/>
        <end position="25"/>
    </location>
</feature>
<feature type="strand" evidence="2">
    <location>
        <begin position="38"/>
        <end position="41"/>
    </location>
</feature>
<feature type="strand" evidence="2">
    <location>
        <begin position="43"/>
        <end position="46"/>
    </location>
</feature>
<feature type="helix" evidence="2">
    <location>
        <begin position="48"/>
        <end position="60"/>
    </location>
</feature>
<feature type="turn" evidence="2">
    <location>
        <begin position="62"/>
        <end position="64"/>
    </location>
</feature>
<feature type="strand" evidence="2">
    <location>
        <begin position="68"/>
        <end position="70"/>
    </location>
</feature>
<feature type="turn" evidence="2">
    <location>
        <begin position="86"/>
        <end position="88"/>
    </location>
</feature>
<feature type="strand" evidence="2">
    <location>
        <begin position="89"/>
        <end position="91"/>
    </location>
</feature>
<feature type="strand" evidence="2">
    <location>
        <begin position="93"/>
        <end position="97"/>
    </location>
</feature>
<feature type="strand" evidence="2">
    <location>
        <begin position="100"/>
        <end position="103"/>
    </location>
</feature>
<feature type="helix" evidence="2">
    <location>
        <begin position="109"/>
        <end position="112"/>
    </location>
</feature>
<feature type="strand" evidence="2">
    <location>
        <begin position="119"/>
        <end position="122"/>
    </location>
</feature>
<feature type="turn" evidence="2">
    <location>
        <begin position="132"/>
        <end position="137"/>
    </location>
</feature>
<feature type="strand" evidence="2">
    <location>
        <begin position="151"/>
        <end position="157"/>
    </location>
</feature>
<feature type="strand" evidence="2">
    <location>
        <begin position="167"/>
        <end position="176"/>
    </location>
</feature>
<feature type="helix" evidence="2">
    <location>
        <begin position="181"/>
        <end position="188"/>
    </location>
</feature>
<feature type="strand" evidence="2">
    <location>
        <begin position="199"/>
        <end position="201"/>
    </location>
</feature>
<feature type="helix" evidence="2">
    <location>
        <begin position="203"/>
        <end position="206"/>
    </location>
</feature>
<feature type="strand" evidence="2">
    <location>
        <begin position="226"/>
        <end position="232"/>
    </location>
</feature>
<feature type="helix" evidence="2">
    <location>
        <begin position="235"/>
        <end position="243"/>
    </location>
</feature>
<feature type="strand" evidence="2">
    <location>
        <begin position="247"/>
        <end position="252"/>
    </location>
</feature>
<feature type="strand" evidence="2">
    <location>
        <begin position="258"/>
        <end position="263"/>
    </location>
</feature>
<keyword id="KW-0002">3D-structure</keyword>
<keyword id="KW-0456">Lyase</keyword>
<keyword id="KW-1185">Reference proteome</keyword>
<sequence length="269" mass="28937">MTIPTSYLNHTDAEAARKARATYRDGLVAPTSGIAPGFTQANMIVLPRDWAFDFLLYAQRNPKPCPVLDVSDPGSPTTLLAPGADLRTDLPLYRIWRDGKLAEETADATSAWAERDDLVAFLIGCSFTFETPMVEAGIEIRHMTDKSNVPMYLTNRPCRPAGRLKGNMVVSMRPIPASRVADAATISGRFPAVHGAPVHVGAPEQIGISDLSKPDFGDAVRIEPGEVPVFWACGVTPQAAVMASGVPFAITHAPGHMFITDIPDTAYHA</sequence>
<gene>
    <name type="ordered locus">Atu3911</name>
    <name type="ORF">AGR_L_1868</name>
</gene>
<name>Y3911_AGRFC</name>
<dbReference type="EC" id="4.2.1.-" evidence="1"/>
<dbReference type="EMBL" id="AE007870">
    <property type="protein sequence ID" value="AAK89508.1"/>
    <property type="molecule type" value="Genomic_DNA"/>
</dbReference>
<dbReference type="PIR" id="AI3037">
    <property type="entry name" value="AI3037"/>
</dbReference>
<dbReference type="PIR" id="B98248">
    <property type="entry name" value="B98248"/>
</dbReference>
<dbReference type="RefSeq" id="NP_356723.1">
    <property type="nucleotide sequence ID" value="NC_003063.2"/>
</dbReference>
<dbReference type="RefSeq" id="WP_010973421.1">
    <property type="nucleotide sequence ID" value="NC_003063.2"/>
</dbReference>
<dbReference type="PDB" id="3DB9">
    <property type="method" value="X-ray"/>
    <property type="resolution" value="2.80 A"/>
    <property type="chains" value="A=1-269"/>
</dbReference>
<dbReference type="PDBsum" id="3DB9"/>
<dbReference type="SMR" id="Q8U919"/>
<dbReference type="STRING" id="176299.Atu3911"/>
<dbReference type="EnsemblBacteria" id="AAK89508">
    <property type="protein sequence ID" value="AAK89508"/>
    <property type="gene ID" value="Atu3911"/>
</dbReference>
<dbReference type="GeneID" id="1135785"/>
<dbReference type="KEGG" id="atu:Atu3911"/>
<dbReference type="PATRIC" id="fig|176299.10.peg.3735"/>
<dbReference type="eggNOG" id="COG4336">
    <property type="taxonomic scope" value="Bacteria"/>
</dbReference>
<dbReference type="HOGENOM" id="CLU_059759_0_0_5"/>
<dbReference type="OrthoDB" id="149585at2"/>
<dbReference type="PhylomeDB" id="Q8U919"/>
<dbReference type="BioCyc" id="AGRO:ATU3911-MONOMER"/>
<dbReference type="EvolutionaryTrace" id="Q8U919"/>
<dbReference type="Proteomes" id="UP000000813">
    <property type="component" value="Chromosome linear"/>
</dbReference>
<dbReference type="GO" id="GO:0016829">
    <property type="term" value="F:lyase activity"/>
    <property type="evidence" value="ECO:0007669"/>
    <property type="project" value="UniProtKB-KW"/>
</dbReference>
<dbReference type="FunFam" id="3.30.2040.10:FF:000001">
    <property type="entry name" value="D-glutamate cyclase, mitochondrial"/>
    <property type="match status" value="1"/>
</dbReference>
<dbReference type="Gene3D" id="3.40.1640.10">
    <property type="entry name" value="PSTPO5379-like"/>
    <property type="match status" value="1"/>
</dbReference>
<dbReference type="Gene3D" id="3.30.2040.10">
    <property type="entry name" value="PSTPO5379-like domain"/>
    <property type="match status" value="1"/>
</dbReference>
<dbReference type="HAMAP" id="MF_01830">
    <property type="entry name" value="Hydro_lyase"/>
    <property type="match status" value="1"/>
</dbReference>
<dbReference type="InterPro" id="IPR009906">
    <property type="entry name" value="D-Glu_cyclase"/>
</dbReference>
<dbReference type="InterPro" id="IPR038021">
    <property type="entry name" value="Putative_hydro-lyase"/>
</dbReference>
<dbReference type="InterPro" id="IPR016938">
    <property type="entry name" value="UPF0317"/>
</dbReference>
<dbReference type="NCBIfam" id="NF003969">
    <property type="entry name" value="PRK05463.1"/>
    <property type="match status" value="1"/>
</dbReference>
<dbReference type="PANTHER" id="PTHR32022">
    <property type="entry name" value="D-GLUTAMATE CYCLASE, MITOCHONDRIAL"/>
    <property type="match status" value="1"/>
</dbReference>
<dbReference type="PANTHER" id="PTHR32022:SF10">
    <property type="entry name" value="D-GLUTAMATE CYCLASE, MITOCHONDRIAL"/>
    <property type="match status" value="1"/>
</dbReference>
<dbReference type="Pfam" id="PF07286">
    <property type="entry name" value="D-Glu_cyclase"/>
    <property type="match status" value="1"/>
</dbReference>
<dbReference type="PIRSF" id="PIRSF029755">
    <property type="entry name" value="UCP029755"/>
    <property type="match status" value="1"/>
</dbReference>
<dbReference type="SUPFAM" id="SSF160920">
    <property type="entry name" value="PSTPO5379-like"/>
    <property type="match status" value="1"/>
</dbReference>
<evidence type="ECO:0000255" key="1">
    <source>
        <dbReference type="HAMAP-Rule" id="MF_01830"/>
    </source>
</evidence>
<evidence type="ECO:0007829" key="2">
    <source>
        <dbReference type="PDB" id="3DB9"/>
    </source>
</evidence>
<proteinExistence type="evidence at protein level"/>
<accession>Q8U919</accession>
<organism>
    <name type="scientific">Agrobacterium fabrum (strain C58 / ATCC 33970)</name>
    <name type="common">Agrobacterium tumefaciens (strain C58)</name>
    <dbReference type="NCBI Taxonomy" id="176299"/>
    <lineage>
        <taxon>Bacteria</taxon>
        <taxon>Pseudomonadati</taxon>
        <taxon>Pseudomonadota</taxon>
        <taxon>Alphaproteobacteria</taxon>
        <taxon>Hyphomicrobiales</taxon>
        <taxon>Rhizobiaceae</taxon>
        <taxon>Rhizobium/Agrobacterium group</taxon>
        <taxon>Agrobacterium</taxon>
        <taxon>Agrobacterium tumefaciens complex</taxon>
    </lineage>
</organism>
<protein>
    <recommendedName>
        <fullName evidence="1">Putative hydro-lyase Atu3911</fullName>
        <ecNumber evidence="1">4.2.1.-</ecNumber>
    </recommendedName>
</protein>
<comment type="similarity">
    <text evidence="1">Belongs to the D-glutamate cyclase family.</text>
</comment>